<reference key="1">
    <citation type="journal article" date="2008" name="Peptides">
        <title>Isolation, characterization and molecular cloning of new temporins from the skin of the North African ranid Pelophylax saharica.</title>
        <authorList>
            <person name="Abbassi F."/>
            <person name="Oury B."/>
            <person name="Blasco T."/>
            <person name="Sereno D."/>
            <person name="Bolbach G."/>
            <person name="Nicolas P."/>
            <person name="Hani K."/>
            <person name="Amiche M."/>
            <person name="Ladram A."/>
        </authorList>
    </citation>
    <scope>NUCLEOTIDE SEQUENCE [MRNA]</scope>
    <scope>SYNTHESIS OF 36-48</scope>
    <scope>AMIDATION AT LEU-48</scope>
    <source>
        <tissue>Skin</tissue>
    </source>
</reference>
<reference key="2">
    <citation type="journal article" date="2008" name="Biochemistry">
        <title>Solution structure and model membrane interactions of temporins-SH, antimicrobial peptides from amphibian skin. A NMR spectroscopy and differential scanning calorimetry study.</title>
        <authorList>
            <person name="Abbassi F."/>
            <person name="Galanth C."/>
            <person name="Amiche M."/>
            <person name="Saito K."/>
            <person name="Piesse C."/>
            <person name="Zargarian L."/>
            <person name="Hani K."/>
            <person name="Nicolas P."/>
            <person name="Lequin O."/>
            <person name="Ladram A."/>
        </authorList>
    </citation>
    <scope>STRUCTURE BY NMR OF 36-48 IN SDS MICELLES</scope>
    <scope>FUNCTION</scope>
    <scope>SYNTHESIS OF 36-48</scope>
</reference>
<organism>
    <name type="scientific">Pelophylax saharicus</name>
    <name type="common">Sahara frog</name>
    <name type="synonym">Rana saharica</name>
    <dbReference type="NCBI Taxonomy" id="70019"/>
    <lineage>
        <taxon>Eukaryota</taxon>
        <taxon>Metazoa</taxon>
        <taxon>Chordata</taxon>
        <taxon>Craniata</taxon>
        <taxon>Vertebrata</taxon>
        <taxon>Euteleostomi</taxon>
        <taxon>Amphibia</taxon>
        <taxon>Batrachia</taxon>
        <taxon>Anura</taxon>
        <taxon>Neobatrachia</taxon>
        <taxon>Ranoidea</taxon>
        <taxon>Ranidae</taxon>
        <taxon>Pelophylax</taxon>
    </lineage>
</organism>
<accession>B3KYH5</accession>
<proteinExistence type="evidence at protein level"/>
<keyword id="KW-0027">Amidation</keyword>
<keyword id="KW-0165">Cleavage on pair of basic residues</keyword>
<keyword id="KW-0964">Secreted</keyword>
<keyword id="KW-0732">Signal</keyword>
<evidence type="ECO:0000250" key="1">
    <source>
        <dbReference type="UniProtKB" id="P79874"/>
    </source>
</evidence>
<evidence type="ECO:0000256" key="2">
    <source>
        <dbReference type="SAM" id="MobiDB-lite"/>
    </source>
</evidence>
<evidence type="ECO:0000269" key="3">
    <source>
    </source>
</evidence>
<evidence type="ECO:0000269" key="4">
    <source>
    </source>
</evidence>
<evidence type="ECO:0000303" key="5">
    <source>
    </source>
</evidence>
<evidence type="ECO:0000303" key="6">
    <source>
    </source>
</evidence>
<evidence type="ECO:0000305" key="7"/>
<evidence type="ECO:0000305" key="8">
    <source>
    </source>
</evidence>
<evidence type="ECO:0000312" key="9">
    <source>
        <dbReference type="EMBL" id="CAO77283.1"/>
    </source>
</evidence>
<dbReference type="EMBL" id="AM748900">
    <property type="protein sequence ID" value="CAO77283.1"/>
    <property type="molecule type" value="mRNA"/>
</dbReference>
<dbReference type="SMR" id="B3KYH5"/>
<dbReference type="GO" id="GO:0005576">
    <property type="term" value="C:extracellular region"/>
    <property type="evidence" value="ECO:0007669"/>
    <property type="project" value="UniProtKB-SubCell"/>
</dbReference>
<dbReference type="InterPro" id="IPR004275">
    <property type="entry name" value="Frog_antimicrobial_propeptide"/>
</dbReference>
<dbReference type="Pfam" id="PF03032">
    <property type="entry name" value="FSAP_sig_propep"/>
    <property type="match status" value="1"/>
</dbReference>
<feature type="signal peptide" evidence="1">
    <location>
        <begin position="1" status="less than"/>
        <end position="10"/>
    </location>
</feature>
<feature type="propeptide" id="PRO_0000450297" evidence="8">
    <location>
        <begin position="11"/>
        <end position="35"/>
    </location>
</feature>
<feature type="peptide" id="PRO_0000450298" description="Temporin-SHb" evidence="8">
    <location>
        <begin position="36"/>
        <end position="48"/>
    </location>
</feature>
<feature type="region of interest" description="Disordered" evidence="2">
    <location>
        <begin position="12"/>
        <end position="31"/>
    </location>
</feature>
<feature type="compositionally biased region" description="Acidic residues" evidence="2">
    <location>
        <begin position="14"/>
        <end position="30"/>
    </location>
</feature>
<feature type="modified residue" description="Leucine amide" evidence="8">
    <location>
        <position position="48"/>
    </location>
</feature>
<feature type="non-terminal residue" evidence="9">
    <location>
        <position position="1"/>
    </location>
</feature>
<sequence length="50" mass="5719">FLGTINLSLCEQERDADEEERRDEPDESDVEVEKRFLPIVTNLLSGLLGK</sequence>
<name>TPB_PELSA</name>
<protein>
    <recommendedName>
        <fullName evidence="6">Temporin-SHb</fullName>
    </recommendedName>
    <alternativeName>
        <fullName evidence="5">Temporin-1Sb</fullName>
        <shortName evidence="5">Temp-1Sb</shortName>
    </alternativeName>
</protein>
<comment type="function">
    <text evidence="3 4">Amphipathic alpha-helical peptide with no antimicrobial activity (PubMed:18584916, PubMed:18795798). Does not display anti-leishmania activity (PubMed:18584916). Does not show hemolytic activity (LC(50)&gt;116 uM) (PubMed:18584916, PubMed:18795798).</text>
</comment>
<comment type="subcellular location">
    <subcellularLocation>
        <location evidence="8">Secreted</location>
    </subcellularLocation>
</comment>
<comment type="tissue specificity">
    <text evidence="8">Expressed by the skin glands.</text>
</comment>
<comment type="miscellaneous">
    <text evidence="3">The peptide is not detected in skin extracts.</text>
</comment>
<comment type="similarity">
    <text evidence="7">Belongs to the frog skin active peptide (FSAP) family. Temporin subfamily.</text>
</comment>
<comment type="online information" name="The antimicrobial peptide database">
    <link uri="https://wangapd3.com/database/query_output.php?ID=00899"/>
</comment>